<name>PPAC_BACCZ</name>
<evidence type="ECO:0000255" key="1">
    <source>
        <dbReference type="HAMAP-Rule" id="MF_00207"/>
    </source>
</evidence>
<reference key="1">
    <citation type="journal article" date="2006" name="J. Bacteriol.">
        <title>Pathogenomic sequence analysis of Bacillus cereus and Bacillus thuringiensis isolates closely related to Bacillus anthracis.</title>
        <authorList>
            <person name="Han C.S."/>
            <person name="Xie G."/>
            <person name="Challacombe J.F."/>
            <person name="Altherr M.R."/>
            <person name="Bhotika S.S."/>
            <person name="Bruce D."/>
            <person name="Campbell C.S."/>
            <person name="Campbell M.L."/>
            <person name="Chen J."/>
            <person name="Chertkov O."/>
            <person name="Cleland C."/>
            <person name="Dimitrijevic M."/>
            <person name="Doggett N.A."/>
            <person name="Fawcett J.J."/>
            <person name="Glavina T."/>
            <person name="Goodwin L.A."/>
            <person name="Hill K.K."/>
            <person name="Hitchcock P."/>
            <person name="Jackson P.J."/>
            <person name="Keim P."/>
            <person name="Kewalramani A.R."/>
            <person name="Longmire J."/>
            <person name="Lucas S."/>
            <person name="Malfatti S."/>
            <person name="McMurry K."/>
            <person name="Meincke L.J."/>
            <person name="Misra M."/>
            <person name="Moseman B.L."/>
            <person name="Mundt M."/>
            <person name="Munk A.C."/>
            <person name="Okinaka R.T."/>
            <person name="Parson-Quintana B."/>
            <person name="Reilly L.P."/>
            <person name="Richardson P."/>
            <person name="Robinson D.L."/>
            <person name="Rubin E."/>
            <person name="Saunders E."/>
            <person name="Tapia R."/>
            <person name="Tesmer J.G."/>
            <person name="Thayer N."/>
            <person name="Thompson L.S."/>
            <person name="Tice H."/>
            <person name="Ticknor L.O."/>
            <person name="Wills P.L."/>
            <person name="Brettin T.S."/>
            <person name="Gilna P."/>
        </authorList>
    </citation>
    <scope>NUCLEOTIDE SEQUENCE [LARGE SCALE GENOMIC DNA]</scope>
    <source>
        <strain>ZK / E33L</strain>
    </source>
</reference>
<accession>Q63AC7</accession>
<organism>
    <name type="scientific">Bacillus cereus (strain ZK / E33L)</name>
    <dbReference type="NCBI Taxonomy" id="288681"/>
    <lineage>
        <taxon>Bacteria</taxon>
        <taxon>Bacillati</taxon>
        <taxon>Bacillota</taxon>
        <taxon>Bacilli</taxon>
        <taxon>Bacillales</taxon>
        <taxon>Bacillaceae</taxon>
        <taxon>Bacillus</taxon>
        <taxon>Bacillus cereus group</taxon>
    </lineage>
</organism>
<feature type="chain" id="PRO_1000012308" description="Probable manganese-dependent inorganic pyrophosphatase">
    <location>
        <begin position="1"/>
        <end position="309"/>
    </location>
</feature>
<feature type="binding site" evidence="1">
    <location>
        <position position="9"/>
    </location>
    <ligand>
        <name>Mn(2+)</name>
        <dbReference type="ChEBI" id="CHEBI:29035"/>
        <label>1</label>
    </ligand>
</feature>
<feature type="binding site" evidence="1">
    <location>
        <position position="13"/>
    </location>
    <ligand>
        <name>Mn(2+)</name>
        <dbReference type="ChEBI" id="CHEBI:29035"/>
        <label>1</label>
    </ligand>
</feature>
<feature type="binding site" evidence="1">
    <location>
        <position position="15"/>
    </location>
    <ligand>
        <name>Mn(2+)</name>
        <dbReference type="ChEBI" id="CHEBI:29035"/>
        <label>2</label>
    </ligand>
</feature>
<feature type="binding site" evidence="1">
    <location>
        <position position="75"/>
    </location>
    <ligand>
        <name>Mn(2+)</name>
        <dbReference type="ChEBI" id="CHEBI:29035"/>
        <label>1</label>
    </ligand>
</feature>
<feature type="binding site" evidence="1">
    <location>
        <position position="75"/>
    </location>
    <ligand>
        <name>Mn(2+)</name>
        <dbReference type="ChEBI" id="CHEBI:29035"/>
        <label>2</label>
    </ligand>
</feature>
<feature type="binding site" evidence="1">
    <location>
        <position position="97"/>
    </location>
    <ligand>
        <name>Mn(2+)</name>
        <dbReference type="ChEBI" id="CHEBI:29035"/>
        <label>2</label>
    </ligand>
</feature>
<feature type="binding site" evidence="1">
    <location>
        <position position="149"/>
    </location>
    <ligand>
        <name>Mn(2+)</name>
        <dbReference type="ChEBI" id="CHEBI:29035"/>
        <label>2</label>
    </ligand>
</feature>
<protein>
    <recommendedName>
        <fullName evidence="1">Probable manganese-dependent inorganic pyrophosphatase</fullName>
        <ecNumber evidence="1">3.6.1.1</ecNumber>
    </recommendedName>
    <alternativeName>
        <fullName evidence="1">Pyrophosphate phospho-hydrolase</fullName>
        <shortName evidence="1">PPase</shortName>
    </alternativeName>
</protein>
<keyword id="KW-0963">Cytoplasm</keyword>
<keyword id="KW-0378">Hydrolase</keyword>
<keyword id="KW-0464">Manganese</keyword>
<keyword id="KW-0479">Metal-binding</keyword>
<comment type="catalytic activity">
    <reaction evidence="1">
        <text>diphosphate + H2O = 2 phosphate + H(+)</text>
        <dbReference type="Rhea" id="RHEA:24576"/>
        <dbReference type="ChEBI" id="CHEBI:15377"/>
        <dbReference type="ChEBI" id="CHEBI:15378"/>
        <dbReference type="ChEBI" id="CHEBI:33019"/>
        <dbReference type="ChEBI" id="CHEBI:43474"/>
        <dbReference type="EC" id="3.6.1.1"/>
    </reaction>
</comment>
<comment type="cofactor">
    <cofactor evidence="1">
        <name>Mn(2+)</name>
        <dbReference type="ChEBI" id="CHEBI:29035"/>
    </cofactor>
    <text evidence="1">Binds 2 manganese ions per subunit.</text>
</comment>
<comment type="subcellular location">
    <subcellularLocation>
        <location evidence="1">Cytoplasm</location>
    </subcellularLocation>
</comment>
<comment type="similarity">
    <text evidence="1">Belongs to the PPase class C family.</text>
</comment>
<dbReference type="EC" id="3.6.1.1" evidence="1"/>
<dbReference type="EMBL" id="CP000001">
    <property type="protein sequence ID" value="AAU17708.1"/>
    <property type="molecule type" value="Genomic_DNA"/>
</dbReference>
<dbReference type="RefSeq" id="WP_000416876.1">
    <property type="nucleotide sequence ID" value="NZ_CP009968.1"/>
</dbReference>
<dbReference type="SMR" id="Q63AC7"/>
<dbReference type="KEGG" id="bcz:BCE33L2551"/>
<dbReference type="PATRIC" id="fig|288681.22.peg.2921"/>
<dbReference type="Proteomes" id="UP000002612">
    <property type="component" value="Chromosome"/>
</dbReference>
<dbReference type="GO" id="GO:0005737">
    <property type="term" value="C:cytoplasm"/>
    <property type="evidence" value="ECO:0007669"/>
    <property type="project" value="UniProtKB-SubCell"/>
</dbReference>
<dbReference type="GO" id="GO:0004427">
    <property type="term" value="F:inorganic diphosphate phosphatase activity"/>
    <property type="evidence" value="ECO:0007669"/>
    <property type="project" value="UniProtKB-UniRule"/>
</dbReference>
<dbReference type="GO" id="GO:0030145">
    <property type="term" value="F:manganese ion binding"/>
    <property type="evidence" value="ECO:0007669"/>
    <property type="project" value="UniProtKB-UniRule"/>
</dbReference>
<dbReference type="FunFam" id="3.10.310.20:FF:000001">
    <property type="entry name" value="Probable manganese-dependent inorganic pyrophosphatase"/>
    <property type="match status" value="1"/>
</dbReference>
<dbReference type="FunFam" id="3.90.1640.10:FF:000001">
    <property type="entry name" value="Probable manganese-dependent inorganic pyrophosphatase"/>
    <property type="match status" value="1"/>
</dbReference>
<dbReference type="Gene3D" id="3.10.310.20">
    <property type="entry name" value="DHHA2 domain"/>
    <property type="match status" value="1"/>
</dbReference>
<dbReference type="Gene3D" id="3.90.1640.10">
    <property type="entry name" value="inorganic pyrophosphatase (n-terminal core)"/>
    <property type="match status" value="1"/>
</dbReference>
<dbReference type="HAMAP" id="MF_00207">
    <property type="entry name" value="PPase_C"/>
    <property type="match status" value="1"/>
</dbReference>
<dbReference type="InterPro" id="IPR001667">
    <property type="entry name" value="DDH_dom"/>
</dbReference>
<dbReference type="InterPro" id="IPR038763">
    <property type="entry name" value="DHH_sf"/>
</dbReference>
<dbReference type="InterPro" id="IPR004097">
    <property type="entry name" value="DHHA2"/>
</dbReference>
<dbReference type="InterPro" id="IPR038222">
    <property type="entry name" value="DHHA2_dom_sf"/>
</dbReference>
<dbReference type="InterPro" id="IPR022934">
    <property type="entry name" value="Mn-dep_inorganic_PyrPase"/>
</dbReference>
<dbReference type="NCBIfam" id="NF003877">
    <property type="entry name" value="PRK05427.1"/>
    <property type="match status" value="1"/>
</dbReference>
<dbReference type="PANTHER" id="PTHR12112">
    <property type="entry name" value="BNIP - RELATED"/>
    <property type="match status" value="1"/>
</dbReference>
<dbReference type="PANTHER" id="PTHR12112:SF22">
    <property type="entry name" value="MANGANESE-DEPENDENT INORGANIC PYROPHOSPHATASE-RELATED"/>
    <property type="match status" value="1"/>
</dbReference>
<dbReference type="Pfam" id="PF01368">
    <property type="entry name" value="DHH"/>
    <property type="match status" value="1"/>
</dbReference>
<dbReference type="Pfam" id="PF02833">
    <property type="entry name" value="DHHA2"/>
    <property type="match status" value="1"/>
</dbReference>
<dbReference type="SMART" id="SM01131">
    <property type="entry name" value="DHHA2"/>
    <property type="match status" value="1"/>
</dbReference>
<dbReference type="SUPFAM" id="SSF64182">
    <property type="entry name" value="DHH phosphoesterases"/>
    <property type="match status" value="1"/>
</dbReference>
<proteinExistence type="inferred from homology"/>
<gene>
    <name evidence="1" type="primary">ppaC</name>
    <name type="ordered locus">BCE33L2551</name>
</gene>
<sequence length="309" mass="33748">MEKVLVFGHKNPDTDAICSAIAYAELKKELGMNAEPVRLGEISGETQFALNYFKVEGPRFVETVANEVDNVILVDHNERQQSANDIESVRVLEVIDHHRIANFETSDPIYYRCEPVGCTATILNKMYKENGVTIRKEVAGLMLSAIISDSLLFKSPTCTEQDVAAARELAEIAGVDADKYGLEMLKAGADLSGKTMEQLISLDAKEFQMGNAKVEIAQVNAVDTNDVLVHQAELEKVISAVVEEKGLDLFLFVVTDILTNDSVGLAIGKAANIVEKAYNVSLENNTATLKGVVSRKKQIVPVLTEAFQA</sequence>